<feature type="chain" id="PRO_0000368181" description="Intermediate capsid protein VP6">
    <location>
        <begin position="1"/>
        <end position="397"/>
    </location>
</feature>
<feature type="region of interest" description="Interaction with the inner capsid protein VP2" evidence="1">
    <location>
        <begin position="62"/>
        <end position="73"/>
    </location>
</feature>
<feature type="binding site" evidence="1">
    <location>
        <position position="153"/>
    </location>
    <ligand>
        <name>Zn(2+)</name>
        <dbReference type="ChEBI" id="CHEBI:29105"/>
        <note>ligand shared between all trimeric partners</note>
    </ligand>
</feature>
<feature type="binding site" evidence="1">
    <location>
        <position position="266"/>
    </location>
    <ligand>
        <name>Ca(2+)</name>
        <dbReference type="ChEBI" id="CHEBI:29108"/>
    </ligand>
</feature>
<feature type="binding site" evidence="1">
    <location>
        <position position="286"/>
    </location>
    <ligand>
        <name>Ca(2+)</name>
        <dbReference type="ChEBI" id="CHEBI:29108"/>
    </ligand>
</feature>
<protein>
    <recommendedName>
        <fullName evidence="1">Intermediate capsid protein VP6</fullName>
    </recommendedName>
</protein>
<reference key="1">
    <citation type="journal article" date="2008" name="J. Virol.">
        <title>Full genome-based classification of rotaviruses reveals a common origin between human Wa-Like and porcine rotavirus strains and human DS-1-like and bovine rotavirus strains.</title>
        <authorList>
            <person name="Matthijnssens J."/>
            <person name="Ciarlet M."/>
            <person name="Heiman E.M."/>
            <person name="Arijs I."/>
            <person name="Delbeke T."/>
            <person name="McDonald S.M."/>
            <person name="Palombo E.A."/>
            <person name="Iturriza-Gomara M."/>
            <person name="Maes P."/>
            <person name="Patton J.T."/>
            <person name="Rahman M."/>
            <person name="Van Ranst M."/>
        </authorList>
    </citation>
    <scope>NUCLEOTIDE SEQUENCE [GENOMIC RNA]</scope>
</reference>
<organismHost>
    <name type="scientific">Homo sapiens</name>
    <name type="common">Human</name>
    <dbReference type="NCBI Taxonomy" id="9606"/>
</organismHost>
<evidence type="ECO:0000255" key="1">
    <source>
        <dbReference type="HAMAP-Rule" id="MF_04129"/>
    </source>
</evidence>
<accession>B1NKT2</accession>
<keyword id="KW-0106">Calcium</keyword>
<keyword id="KW-0167">Capsid protein</keyword>
<keyword id="KW-1154">Intermediate capsid protein</keyword>
<keyword id="KW-0479">Metal-binding</keyword>
<keyword id="KW-0832">Ubl conjugation</keyword>
<keyword id="KW-0946">Virion</keyword>
<keyword id="KW-0862">Zinc</keyword>
<name>VP6_ROTHP</name>
<dbReference type="EMBL" id="EF583040">
    <property type="protein sequence ID" value="ABU87849.1"/>
    <property type="molecule type" value="Genomic_RNA"/>
</dbReference>
<dbReference type="SMR" id="B1NKT2"/>
<dbReference type="Proteomes" id="UP000007047">
    <property type="component" value="Genome"/>
</dbReference>
<dbReference type="GO" id="GO:0019031">
    <property type="term" value="C:viral envelope"/>
    <property type="evidence" value="ECO:0007669"/>
    <property type="project" value="UniProtKB-UniRule"/>
</dbReference>
<dbReference type="GO" id="GO:0039626">
    <property type="term" value="C:viral intermediate capsid"/>
    <property type="evidence" value="ECO:0007669"/>
    <property type="project" value="UniProtKB-UniRule"/>
</dbReference>
<dbReference type="GO" id="GO:0046789">
    <property type="term" value="F:host cell surface receptor binding"/>
    <property type="evidence" value="ECO:0007669"/>
    <property type="project" value="UniProtKB-UniRule"/>
</dbReference>
<dbReference type="GO" id="GO:0046872">
    <property type="term" value="F:metal ion binding"/>
    <property type="evidence" value="ECO:0007669"/>
    <property type="project" value="UniProtKB-UniRule"/>
</dbReference>
<dbReference type="GO" id="GO:0005198">
    <property type="term" value="F:structural molecule activity"/>
    <property type="evidence" value="ECO:0007669"/>
    <property type="project" value="UniProtKB-UniRule"/>
</dbReference>
<dbReference type="GO" id="GO:0019064">
    <property type="term" value="P:fusion of virus membrane with host plasma membrane"/>
    <property type="evidence" value="ECO:0007669"/>
    <property type="project" value="UniProtKB-UniRule"/>
</dbReference>
<dbReference type="FunFam" id="2.60.120.170:FF:000001">
    <property type="entry name" value="Intermediate capsid protein VP6"/>
    <property type="match status" value="1"/>
</dbReference>
<dbReference type="Gene3D" id="2.60.120.170">
    <property type="match status" value="1"/>
</dbReference>
<dbReference type="Gene3D" id="1.10.1350.10">
    <property type="entry name" value="Viral capsid alpha domain"/>
    <property type="match status" value="1"/>
</dbReference>
<dbReference type="HAMAP" id="MF_04126">
    <property type="entry name" value="Rota_VP6"/>
    <property type="match status" value="1"/>
</dbReference>
<dbReference type="HAMAP" id="MF_04129">
    <property type="entry name" value="Rota_VP6_A"/>
    <property type="match status" value="1"/>
</dbReference>
<dbReference type="InterPro" id="IPR008980">
    <property type="entry name" value="Capsid_hemagglutn"/>
</dbReference>
<dbReference type="InterPro" id="IPR001385">
    <property type="entry name" value="Rotavirus_A/C_VP6"/>
</dbReference>
<dbReference type="InterPro" id="IPR008935">
    <property type="entry name" value="Virus_capsid_a-hlx_vir"/>
</dbReference>
<dbReference type="Pfam" id="PF00980">
    <property type="entry name" value="Rota_Capsid_VP6"/>
    <property type="match status" value="1"/>
</dbReference>
<dbReference type="SUPFAM" id="SSF48345">
    <property type="entry name" value="A virus capsid protein alpha-helical domain"/>
    <property type="match status" value="1"/>
</dbReference>
<dbReference type="SUPFAM" id="SSF49818">
    <property type="entry name" value="Viral protein domain"/>
    <property type="match status" value="1"/>
</dbReference>
<proteinExistence type="inferred from homology"/>
<organism>
    <name type="scientific">Rotavirus A (strain RVA/Human/United States/P/1974/G3P1A[8])</name>
    <name type="common">RV-A</name>
    <dbReference type="NCBI Taxonomy" id="10957"/>
    <lineage>
        <taxon>Viruses</taxon>
        <taxon>Riboviria</taxon>
        <taxon>Orthornavirae</taxon>
        <taxon>Duplornaviricota</taxon>
        <taxon>Resentoviricetes</taxon>
        <taxon>Reovirales</taxon>
        <taxon>Sedoreoviridae</taxon>
        <taxon>Rotavirus</taxon>
        <taxon>Rotavirus A</taxon>
    </lineage>
</organism>
<comment type="function">
    <text evidence="1">Intermediate capsid protein that self assembles to form an icosahedral capsid with a T=13 symmetry, which consists of 230 trimers of VP6, with channels at each of its five-fold vertices. This capsid constitutes the middle concentric layer of the viral mature particle. The innermost VP2 capsid and the intermediate VP6 capsid remain intact following cell entry to protect the dsRNA from degradation and to prevent unfavorable antiviral responses in the host cell during all the replication cycle of the virus. Nascent transcripts are transcribed within the structural confines of this double-layered particle (DLP) and are extruded through the channels at the five-fold axes. VP6 is required for the transcription activity of the DLP.</text>
</comment>
<comment type="subunit">
    <text evidence="1">Homotrimer. Interacts with the inner capsid protein VP2. Interacts with the outer capsid glycoprotein VP7. Interacts with the outer capsid protein VP5*.</text>
</comment>
<comment type="subcellular location">
    <subcellularLocation>
        <location evidence="1">Virion</location>
    </subcellularLocation>
    <text evidence="1">Component of the intermediate capsid. Also found in spherical cytoplasmic structures, called virus factories, that appear early after infection and are the site of viral replication and packaging.</text>
</comment>
<comment type="PTM">
    <text evidence="1">The N-terminus is blocked.</text>
</comment>
<comment type="PTM">
    <text evidence="1">Sumoylated with SUMO1 and SUMO2. Sumoylation of viral proteins seems to have a positive role on viral replication.</text>
</comment>
<comment type="miscellaneous">
    <text evidence="1">The VP6 trimer contains a zinc ion located at the center of the molecule. The zinc ion is not essential for either trimerization or transcription activity of the DLP. Zinc-depleted VP6 has an increased sensitivity to proteases.</text>
</comment>
<comment type="similarity">
    <text evidence="1">Belongs to the rotavirus VP6 family.</text>
</comment>
<sequence length="397" mass="44942">MEVLYSLSKTLKNARDKIVEGTLYSNVSDLIQQFNQMIVTMNGNDFQTGGIGNLPIRNWTFDFGLLGTTLLNLDANYVETARTTIEYFIDFIDNVCMDEMARESQRNGVAPQSEALRKLAGIKFKRINFNNSSEYIENWNLQNRRQRTGFVFHKPNIFPYSASFTLNRSQPMHDNLMGTMWLNAGSEIQVAGFDYSCALNAPANIQQFEHIVQLRRALTTATITLLPDAERFSFPRVINSADGATTWFFNPIILRPNNVEVEFLLNGQIINTYQARFGTIIARNFDTIRLSFQLMRPPNMTPAVNALFPQAQPFQHHATVGLTLRIESAVCESVLADANETLLANVTAVRQEYAIPVGPVFPPGMNWTELITNYSPSREDNLQRVFTVASIRSMLIK</sequence>